<evidence type="ECO:0000250" key="1">
    <source>
        <dbReference type="UniProtKB" id="P02709"/>
    </source>
</evidence>
<evidence type="ECO:0000250" key="2">
    <source>
        <dbReference type="UniProtKB" id="P43681"/>
    </source>
</evidence>
<evidence type="ECO:0000250" key="3">
    <source>
        <dbReference type="UniProtKB" id="Q15822"/>
    </source>
</evidence>
<evidence type="ECO:0000255" key="4"/>
<evidence type="ECO:0000256" key="5">
    <source>
        <dbReference type="SAM" id="MobiDB-lite"/>
    </source>
</evidence>
<evidence type="ECO:0000305" key="6"/>
<comment type="function">
    <text evidence="3">Component of neuronal acetylcholine receptors (nAChRs) that function as pentameric, ligand-gated cation channels with high calcium permeability among other activities. nAChRs are excitatory neurotrasnmitter receptors formed by a collection of nAChR subunits known to mediate synaptic transmission in the nervous system and the neuromuscular junction. Each nAchR subunit confers differential attributes to channel properties, including activation, deactivation and desensitization kinetics, pH sensitivity, cation permeability, and binding to allosteric modulators. CHRNA2 forms heteropentameric neuronal acetylcholine receptors with CHRNB2 and CHRNB4 and plays a role in nicotine dependence.</text>
</comment>
<comment type="catalytic activity">
    <reaction evidence="2">
        <text>Ca(2+)(in) = Ca(2+)(out)</text>
        <dbReference type="Rhea" id="RHEA:29671"/>
        <dbReference type="ChEBI" id="CHEBI:29108"/>
    </reaction>
</comment>
<comment type="catalytic activity">
    <reaction evidence="1">
        <text>K(+)(in) = K(+)(out)</text>
        <dbReference type="Rhea" id="RHEA:29463"/>
        <dbReference type="ChEBI" id="CHEBI:29103"/>
    </reaction>
</comment>
<comment type="catalytic activity">
    <reaction evidence="2">
        <text>Na(+)(in) = Na(+)(out)</text>
        <dbReference type="Rhea" id="RHEA:34963"/>
        <dbReference type="ChEBI" id="CHEBI:29101"/>
    </reaction>
</comment>
<comment type="subunit">
    <text evidence="3">Neuronal AChR is composed of two different types of subunits: alpha and non-alpha (beta). CHRNA2/alpha-2 subunit can be combined to CHRNB2/beta-2 or CHRNB4/beta-4 to give rise to functional receptors. Both CHRNA2:CHRNB2 and CHRNA2:CHRNB4 nAChR complexes are heteropentamers with two subtypes: LS (low agonist sensitivity) with a (CHRNA2)3:(CHRNB2/4)2 and HS (high agonist sensitivity) with a (CHRNA2)2:(CHRNB2/4)3 stoichiometries; the subtypes differ in their subunit binding interfaces which are involved in ligand binding.</text>
</comment>
<comment type="subcellular location">
    <subcellularLocation>
        <location evidence="3">Synaptic cell membrane</location>
        <topology evidence="4">Multi-pass membrane protein</topology>
    </subcellularLocation>
    <subcellularLocation>
        <location evidence="3">Cell membrane</location>
        <topology evidence="4">Multi-pass membrane protein</topology>
    </subcellularLocation>
</comment>
<comment type="similarity">
    <text evidence="6">Belongs to the ligand-gated ion channel (TC 1.A.9) family. Acetylcholine receptor (TC 1.A.9.1) subfamily. Alpha-2/CHRNA2 sub-subfamily.</text>
</comment>
<name>ACHA2_CHICK</name>
<proteinExistence type="evidence at transcript level"/>
<keyword id="KW-1003">Cell membrane</keyword>
<keyword id="KW-1015">Disulfide bond</keyword>
<keyword id="KW-0325">Glycoprotein</keyword>
<keyword id="KW-0407">Ion channel</keyword>
<keyword id="KW-0406">Ion transport</keyword>
<keyword id="KW-1071">Ligand-gated ion channel</keyword>
<keyword id="KW-0472">Membrane</keyword>
<keyword id="KW-0675">Receptor</keyword>
<keyword id="KW-1185">Reference proteome</keyword>
<keyword id="KW-0732">Signal</keyword>
<keyword id="KW-0770">Synapse</keyword>
<keyword id="KW-0812">Transmembrane</keyword>
<keyword id="KW-1133">Transmembrane helix</keyword>
<keyword id="KW-0813">Transport</keyword>
<feature type="signal peptide">
    <location>
        <begin position="1"/>
        <end position="23"/>
    </location>
</feature>
<feature type="chain" id="PRO_0000000344" description="Neuronal acetylcholine receptor subunit alpha-2">
    <location>
        <begin position="24"/>
        <end position="528"/>
    </location>
</feature>
<feature type="topological domain" description="Extracellular">
    <location>
        <begin position="24"/>
        <end position="239"/>
    </location>
</feature>
<feature type="transmembrane region" description="Helical">
    <location>
        <begin position="240"/>
        <end position="264"/>
    </location>
</feature>
<feature type="transmembrane region" description="Helical">
    <location>
        <begin position="272"/>
        <end position="290"/>
    </location>
</feature>
<feature type="transmembrane region" description="Helical">
    <location>
        <begin position="306"/>
        <end position="327"/>
    </location>
</feature>
<feature type="topological domain" description="Cytoplasmic">
    <location>
        <begin position="328"/>
        <end position="501"/>
    </location>
</feature>
<feature type="transmembrane region" description="Helical">
    <location>
        <begin position="502"/>
        <end position="520"/>
    </location>
</feature>
<feature type="region of interest" description="Disordered" evidence="5">
    <location>
        <begin position="390"/>
        <end position="427"/>
    </location>
</feature>
<feature type="compositionally biased region" description="Acidic residues" evidence="5">
    <location>
        <begin position="390"/>
        <end position="410"/>
    </location>
</feature>
<feature type="glycosylation site" description="N-linked (GlcNAc...) asparagine" evidence="4">
    <location>
        <position position="54"/>
    </location>
</feature>
<feature type="glycosylation site" description="N-linked (GlcNAc...) asparagine" evidence="4">
    <location>
        <position position="104"/>
    </location>
</feature>
<feature type="disulfide bond" evidence="3">
    <location>
        <begin position="158"/>
        <end position="172"/>
    </location>
</feature>
<feature type="disulfide bond" description="Associated with receptor activation" evidence="3">
    <location>
        <begin position="222"/>
        <end position="223"/>
    </location>
</feature>
<reference key="1">
    <citation type="journal article" date="1988" name="EMBO J.">
        <title>Genes expressed in the brain define three distinct neuronal nicotinic acetylcholine receptors.</title>
        <authorList>
            <person name="Nef P."/>
            <person name="Oneyser C."/>
            <person name="Alliod C."/>
            <person name="Couturier S."/>
            <person name="Ballivet M."/>
        </authorList>
    </citation>
    <scope>NUCLEOTIDE SEQUENCE [GENOMIC DNA / MRNA]</scope>
    <source>
        <strain>White leghorn</strain>
        <tissue>Brain</tissue>
    </source>
</reference>
<accession>P09480</accession>
<organism>
    <name type="scientific">Gallus gallus</name>
    <name type="common">Chicken</name>
    <dbReference type="NCBI Taxonomy" id="9031"/>
    <lineage>
        <taxon>Eukaryota</taxon>
        <taxon>Metazoa</taxon>
        <taxon>Chordata</taxon>
        <taxon>Craniata</taxon>
        <taxon>Vertebrata</taxon>
        <taxon>Euteleostomi</taxon>
        <taxon>Archelosauria</taxon>
        <taxon>Archosauria</taxon>
        <taxon>Dinosauria</taxon>
        <taxon>Saurischia</taxon>
        <taxon>Theropoda</taxon>
        <taxon>Coelurosauria</taxon>
        <taxon>Aves</taxon>
        <taxon>Neognathae</taxon>
        <taxon>Galloanserae</taxon>
        <taxon>Galliformes</taxon>
        <taxon>Phasianidae</taxon>
        <taxon>Phasianinae</taxon>
        <taxon>Gallus</taxon>
    </lineage>
</organism>
<protein>
    <recommendedName>
        <fullName>Neuronal acetylcholine receptor subunit alpha-2</fullName>
    </recommendedName>
</protein>
<gene>
    <name type="primary">CHRNA2</name>
</gene>
<dbReference type="EMBL" id="X07339">
    <property type="protein sequence ID" value="CAB59645.1"/>
    <property type="molecule type" value="Genomic_DNA"/>
</dbReference>
<dbReference type="EMBL" id="X07340">
    <property type="protein sequence ID" value="CAB59645.1"/>
    <property type="status" value="JOINED"/>
    <property type="molecule type" value="Genomic_DNA"/>
</dbReference>
<dbReference type="EMBL" id="X07341">
    <property type="protein sequence ID" value="CAB59645.1"/>
    <property type="status" value="JOINED"/>
    <property type="molecule type" value="Genomic_DNA"/>
</dbReference>
<dbReference type="EMBL" id="X07342">
    <property type="protein sequence ID" value="CAB59645.1"/>
    <property type="status" value="JOINED"/>
    <property type="molecule type" value="Genomic_DNA"/>
</dbReference>
<dbReference type="EMBL" id="X07343">
    <property type="protein sequence ID" value="CAB59645.1"/>
    <property type="status" value="JOINED"/>
    <property type="molecule type" value="Genomic_DNA"/>
</dbReference>
<dbReference type="EMBL" id="X07344">
    <property type="protein sequence ID" value="CAB59645.1"/>
    <property type="status" value="JOINED"/>
    <property type="molecule type" value="Genomic_DNA"/>
</dbReference>
<dbReference type="EMBL" id="AJ250360">
    <property type="protein sequence ID" value="CAB59625.1"/>
    <property type="molecule type" value="mRNA"/>
</dbReference>
<dbReference type="PIR" id="S00377">
    <property type="entry name" value="ACCH2N"/>
</dbReference>
<dbReference type="RefSeq" id="NP_990146.1">
    <property type="nucleotide sequence ID" value="NM_204815.2"/>
</dbReference>
<dbReference type="SMR" id="P09480"/>
<dbReference type="ComplexPortal" id="CPX-179">
    <property type="entry name" value="Neuronal nicotinic acetylcholine receptor complex, alpha2-beta2"/>
</dbReference>
<dbReference type="ComplexPortal" id="CPX-184">
    <property type="entry name" value="Neuronal nicotinic acetylcholine receptor complex, alpha2-beta4"/>
</dbReference>
<dbReference type="FunCoup" id="P09480">
    <property type="interactions" value="47"/>
</dbReference>
<dbReference type="IntAct" id="P09480">
    <property type="interactions" value="2"/>
</dbReference>
<dbReference type="STRING" id="9031.ENSGALP00000026687"/>
<dbReference type="GlyCosmos" id="P09480">
    <property type="glycosylation" value="2 sites, No reported glycans"/>
</dbReference>
<dbReference type="GlyGen" id="P09480">
    <property type="glycosylation" value="2 sites"/>
</dbReference>
<dbReference type="PaxDb" id="9031-ENSGALP00000026687"/>
<dbReference type="GeneID" id="395607"/>
<dbReference type="KEGG" id="gga:395607"/>
<dbReference type="CTD" id="1135"/>
<dbReference type="VEuPathDB" id="HostDB:geneid_395607"/>
<dbReference type="eggNOG" id="KOG3645">
    <property type="taxonomic scope" value="Eukaryota"/>
</dbReference>
<dbReference type="InParanoid" id="P09480"/>
<dbReference type="OMA" id="SSYHWLE"/>
<dbReference type="OrthoDB" id="5975154at2759"/>
<dbReference type="PhylomeDB" id="P09480"/>
<dbReference type="PRO" id="PR:P09480"/>
<dbReference type="Proteomes" id="UP000000539">
    <property type="component" value="Unassembled WGS sequence"/>
</dbReference>
<dbReference type="GO" id="GO:0005892">
    <property type="term" value="C:acetylcholine-gated channel complex"/>
    <property type="evidence" value="ECO:0000318"/>
    <property type="project" value="GO_Central"/>
</dbReference>
<dbReference type="GO" id="GO:0043005">
    <property type="term" value="C:neuron projection"/>
    <property type="evidence" value="ECO:0000318"/>
    <property type="project" value="GO_Central"/>
</dbReference>
<dbReference type="GO" id="GO:0005886">
    <property type="term" value="C:plasma membrane"/>
    <property type="evidence" value="ECO:0000318"/>
    <property type="project" value="GO_Central"/>
</dbReference>
<dbReference type="GO" id="GO:0045211">
    <property type="term" value="C:postsynaptic membrane"/>
    <property type="evidence" value="ECO:0007669"/>
    <property type="project" value="UniProtKB-KW"/>
</dbReference>
<dbReference type="GO" id="GO:0045202">
    <property type="term" value="C:synapse"/>
    <property type="evidence" value="ECO:0000318"/>
    <property type="project" value="GO_Central"/>
</dbReference>
<dbReference type="GO" id="GO:0022848">
    <property type="term" value="F:acetylcholine-gated monoatomic cation-selective channel activity"/>
    <property type="evidence" value="ECO:0000318"/>
    <property type="project" value="GO_Central"/>
</dbReference>
<dbReference type="GO" id="GO:0004888">
    <property type="term" value="F:transmembrane signaling receptor activity"/>
    <property type="evidence" value="ECO:0007669"/>
    <property type="project" value="InterPro"/>
</dbReference>
<dbReference type="GO" id="GO:0095500">
    <property type="term" value="P:acetylcholine receptor signaling pathway"/>
    <property type="evidence" value="ECO:0000318"/>
    <property type="project" value="GO_Central"/>
</dbReference>
<dbReference type="GO" id="GO:0051899">
    <property type="term" value="P:membrane depolarization"/>
    <property type="evidence" value="ECO:0000318"/>
    <property type="project" value="GO_Central"/>
</dbReference>
<dbReference type="GO" id="GO:0034220">
    <property type="term" value="P:monoatomic ion transmembrane transport"/>
    <property type="evidence" value="ECO:0000318"/>
    <property type="project" value="GO_Central"/>
</dbReference>
<dbReference type="GO" id="GO:0007274">
    <property type="term" value="P:neuromuscular synaptic transmission"/>
    <property type="evidence" value="ECO:0000318"/>
    <property type="project" value="GO_Central"/>
</dbReference>
<dbReference type="GO" id="GO:0035094">
    <property type="term" value="P:response to nicotine"/>
    <property type="evidence" value="ECO:0000318"/>
    <property type="project" value="GO_Central"/>
</dbReference>
<dbReference type="GO" id="GO:0007271">
    <property type="term" value="P:synaptic transmission, cholinergic"/>
    <property type="evidence" value="ECO:0000318"/>
    <property type="project" value="GO_Central"/>
</dbReference>
<dbReference type="CDD" id="cd19015">
    <property type="entry name" value="LGIC_ECD_nAChR_A2"/>
    <property type="match status" value="1"/>
</dbReference>
<dbReference type="CDD" id="cd19064">
    <property type="entry name" value="LGIC_TM_nAChR"/>
    <property type="match status" value="1"/>
</dbReference>
<dbReference type="FunFam" id="1.20.58.390:FF:000014">
    <property type="entry name" value="Neuronal nicotinic acetylcholine receptor alpha4 subunit"/>
    <property type="match status" value="1"/>
</dbReference>
<dbReference type="FunFam" id="2.70.170.10:FF:000005">
    <property type="entry name" value="Neuronal nicotinic acetylcholine receptor alpha4 subunit"/>
    <property type="match status" value="1"/>
</dbReference>
<dbReference type="FunFam" id="1.20.58.390:FF:000001">
    <property type="entry name" value="Neuronal nicotinic acetylcholine receptor subunit 3"/>
    <property type="match status" value="1"/>
</dbReference>
<dbReference type="Gene3D" id="2.70.170.10">
    <property type="entry name" value="Neurotransmitter-gated ion-channel ligand-binding domain"/>
    <property type="match status" value="1"/>
</dbReference>
<dbReference type="Gene3D" id="1.20.58.390">
    <property type="entry name" value="Neurotransmitter-gated ion-channel transmembrane domain"/>
    <property type="match status" value="2"/>
</dbReference>
<dbReference type="InterPro" id="IPR006202">
    <property type="entry name" value="Neur_chan_lig-bd"/>
</dbReference>
<dbReference type="InterPro" id="IPR036734">
    <property type="entry name" value="Neur_chan_lig-bd_sf"/>
</dbReference>
<dbReference type="InterPro" id="IPR006201">
    <property type="entry name" value="Neur_channel"/>
</dbReference>
<dbReference type="InterPro" id="IPR036719">
    <property type="entry name" value="Neuro-gated_channel_TM_sf"/>
</dbReference>
<dbReference type="InterPro" id="IPR038050">
    <property type="entry name" value="Neuro_actylchol_rec"/>
</dbReference>
<dbReference type="InterPro" id="IPR006029">
    <property type="entry name" value="Neurotrans-gated_channel_TM"/>
</dbReference>
<dbReference type="InterPro" id="IPR018000">
    <property type="entry name" value="Neurotransmitter_ion_chnl_CS"/>
</dbReference>
<dbReference type="InterPro" id="IPR002394">
    <property type="entry name" value="Nicotinic_acetylcholine_rcpt"/>
</dbReference>
<dbReference type="NCBIfam" id="TIGR00860">
    <property type="entry name" value="LIC"/>
    <property type="match status" value="1"/>
</dbReference>
<dbReference type="PANTHER" id="PTHR18945">
    <property type="entry name" value="NEUROTRANSMITTER GATED ION CHANNEL"/>
    <property type="match status" value="1"/>
</dbReference>
<dbReference type="Pfam" id="PF02931">
    <property type="entry name" value="Neur_chan_LBD"/>
    <property type="match status" value="1"/>
</dbReference>
<dbReference type="Pfam" id="PF02932">
    <property type="entry name" value="Neur_chan_memb"/>
    <property type="match status" value="1"/>
</dbReference>
<dbReference type="PRINTS" id="PR00254">
    <property type="entry name" value="NICOTINICR"/>
</dbReference>
<dbReference type="PRINTS" id="PR00252">
    <property type="entry name" value="NRIONCHANNEL"/>
</dbReference>
<dbReference type="SUPFAM" id="SSF90112">
    <property type="entry name" value="Neurotransmitter-gated ion-channel transmembrane pore"/>
    <property type="match status" value="1"/>
</dbReference>
<dbReference type="SUPFAM" id="SSF63712">
    <property type="entry name" value="Nicotinic receptor ligand binding domain-like"/>
    <property type="match status" value="1"/>
</dbReference>
<dbReference type="PROSITE" id="PS00236">
    <property type="entry name" value="NEUROTR_ION_CHANNEL"/>
    <property type="match status" value="1"/>
</dbReference>
<sequence>MGWPCRSIIPLLVWCFVTLQAATREQKQPHGFAEDRLFKHLFTGYNRWSRPVPNTSDVVIVKFGLSIAQLIDVDEKNQMMTTNVWLKQEWSDYKLRWNPEDFDNVTSIRVPSEMIWIPDIVLYNNADGEFAVTHMTKAHLFSNGKVKWVPPAIYKSSCSIDVTYFPFDQQNCKMKFGSWTYDKAKIDLENMEHHVDLKDYWESGEWAIINAIGRYNSKKYDCCTEIYPDITFYFVIRRLPLFYTINLIIPCLLISCLTVLVFYLPSDCGEKITLCISVLLSLTVFLLLITEIIPSTSLVIPLIGEYLLFTMIFVTLSIIITVFVLNVHHRSPSTHTMPHWVRSFFLGFIPRWLFMKRPPLLLPAEGTTGQYDPPGTRLSTSRCWLETDVDDKWEEEEEEEEEEEEEEEEEKAYPSRVPSGGSQGTQCHYSCERQAGKASGGPAPQVPLKGEEVGSDQGLTLSPSILRALEGVQYIADHLRAEDADFSVKEDWKYVAMVIDRIFLWMFIIVCLLGTVGLFLPPYLAGMI</sequence>